<protein>
    <recommendedName>
        <fullName evidence="1">tRNA (guanine-N(1)-)-methyltransferase</fullName>
        <ecNumber evidence="1">2.1.1.228</ecNumber>
    </recommendedName>
    <alternativeName>
        <fullName evidence="1">M1G-methyltransferase</fullName>
    </alternativeName>
    <alternativeName>
        <fullName evidence="1">tRNA [GM37] methyltransferase</fullName>
    </alternativeName>
</protein>
<evidence type="ECO:0000255" key="1">
    <source>
        <dbReference type="HAMAP-Rule" id="MF_00605"/>
    </source>
</evidence>
<keyword id="KW-0963">Cytoplasm</keyword>
<keyword id="KW-0489">Methyltransferase</keyword>
<keyword id="KW-1185">Reference proteome</keyword>
<keyword id="KW-0949">S-adenosyl-L-methionine</keyword>
<keyword id="KW-0808">Transferase</keyword>
<keyword id="KW-0819">tRNA processing</keyword>
<sequence length="240" mass="27498">MKIDILTLFPEMFAPLEHSIVGKAQTKGLLEINYHNFRENAEKARHVDDEPYGGGQGMLLRAQPIFDTFDKIAAKKPRVILLDPAGQQFNQSYAEDLAQEGELIFICGHYEGYDERIKTLVTDEISLGDFILTGGELAAMTIIDATVRLIPEVIGKEASHQDDSFSSGLLEYPQYTRPYEYRGMKVPDVLLSGHHENIRLWRLEQSLRKTWERRPDLLEHYQFTQEEKQLLEKIKSEGSS</sequence>
<dbReference type="EC" id="2.1.1.228" evidence="1"/>
<dbReference type="EMBL" id="AE014133">
    <property type="protein sequence ID" value="AAN58583.1"/>
    <property type="molecule type" value="Genomic_DNA"/>
</dbReference>
<dbReference type="RefSeq" id="NP_721277.1">
    <property type="nucleotide sequence ID" value="NC_004350.2"/>
</dbReference>
<dbReference type="RefSeq" id="WP_002262016.1">
    <property type="nucleotide sequence ID" value="NC_004350.2"/>
</dbReference>
<dbReference type="SMR" id="Q8DUN6"/>
<dbReference type="STRING" id="210007.SMU_868"/>
<dbReference type="KEGG" id="smu:SMU_868"/>
<dbReference type="eggNOG" id="COG0336">
    <property type="taxonomic scope" value="Bacteria"/>
</dbReference>
<dbReference type="HOGENOM" id="CLU_047363_0_1_9"/>
<dbReference type="OrthoDB" id="9807416at2"/>
<dbReference type="PhylomeDB" id="Q8DUN6"/>
<dbReference type="Proteomes" id="UP000002512">
    <property type="component" value="Chromosome"/>
</dbReference>
<dbReference type="GO" id="GO:0005829">
    <property type="term" value="C:cytosol"/>
    <property type="evidence" value="ECO:0007669"/>
    <property type="project" value="TreeGrafter"/>
</dbReference>
<dbReference type="GO" id="GO:0052906">
    <property type="term" value="F:tRNA (guanine(37)-N1)-methyltransferase activity"/>
    <property type="evidence" value="ECO:0007669"/>
    <property type="project" value="UniProtKB-UniRule"/>
</dbReference>
<dbReference type="GO" id="GO:0002939">
    <property type="term" value="P:tRNA N1-guanine methylation"/>
    <property type="evidence" value="ECO:0007669"/>
    <property type="project" value="TreeGrafter"/>
</dbReference>
<dbReference type="CDD" id="cd18080">
    <property type="entry name" value="TrmD-like"/>
    <property type="match status" value="1"/>
</dbReference>
<dbReference type="FunFam" id="1.10.1270.20:FF:000001">
    <property type="entry name" value="tRNA (guanine-N(1)-)-methyltransferase"/>
    <property type="match status" value="1"/>
</dbReference>
<dbReference type="FunFam" id="3.40.1280.10:FF:000001">
    <property type="entry name" value="tRNA (guanine-N(1)-)-methyltransferase"/>
    <property type="match status" value="1"/>
</dbReference>
<dbReference type="Gene3D" id="3.40.1280.10">
    <property type="match status" value="1"/>
</dbReference>
<dbReference type="Gene3D" id="1.10.1270.20">
    <property type="entry name" value="tRNA(m1g37)methyltransferase, domain 2"/>
    <property type="match status" value="1"/>
</dbReference>
<dbReference type="HAMAP" id="MF_00605">
    <property type="entry name" value="TrmD"/>
    <property type="match status" value="1"/>
</dbReference>
<dbReference type="InterPro" id="IPR029028">
    <property type="entry name" value="Alpha/beta_knot_MTases"/>
</dbReference>
<dbReference type="InterPro" id="IPR023148">
    <property type="entry name" value="tRNA_m1G_MeTrfase_C_sf"/>
</dbReference>
<dbReference type="InterPro" id="IPR002649">
    <property type="entry name" value="tRNA_m1G_MeTrfase_TrmD"/>
</dbReference>
<dbReference type="InterPro" id="IPR029026">
    <property type="entry name" value="tRNA_m1G_MTases_N"/>
</dbReference>
<dbReference type="InterPro" id="IPR016009">
    <property type="entry name" value="tRNA_MeTrfase_TRMD/TRM10"/>
</dbReference>
<dbReference type="NCBIfam" id="NF000648">
    <property type="entry name" value="PRK00026.1"/>
    <property type="match status" value="1"/>
</dbReference>
<dbReference type="NCBIfam" id="TIGR00088">
    <property type="entry name" value="trmD"/>
    <property type="match status" value="1"/>
</dbReference>
<dbReference type="PANTHER" id="PTHR46417">
    <property type="entry name" value="TRNA (GUANINE-N(1)-)-METHYLTRANSFERASE"/>
    <property type="match status" value="1"/>
</dbReference>
<dbReference type="PANTHER" id="PTHR46417:SF1">
    <property type="entry name" value="TRNA (GUANINE-N(1)-)-METHYLTRANSFERASE"/>
    <property type="match status" value="1"/>
</dbReference>
<dbReference type="Pfam" id="PF01746">
    <property type="entry name" value="tRNA_m1G_MT"/>
    <property type="match status" value="1"/>
</dbReference>
<dbReference type="PIRSF" id="PIRSF000386">
    <property type="entry name" value="tRNA_mtase"/>
    <property type="match status" value="1"/>
</dbReference>
<dbReference type="SUPFAM" id="SSF75217">
    <property type="entry name" value="alpha/beta knot"/>
    <property type="match status" value="1"/>
</dbReference>
<organism>
    <name type="scientific">Streptococcus mutans serotype c (strain ATCC 700610 / UA159)</name>
    <dbReference type="NCBI Taxonomy" id="210007"/>
    <lineage>
        <taxon>Bacteria</taxon>
        <taxon>Bacillati</taxon>
        <taxon>Bacillota</taxon>
        <taxon>Bacilli</taxon>
        <taxon>Lactobacillales</taxon>
        <taxon>Streptococcaceae</taxon>
        <taxon>Streptococcus</taxon>
    </lineage>
</organism>
<feature type="chain" id="PRO_0000060467" description="tRNA (guanine-N(1)-)-methyltransferase">
    <location>
        <begin position="1"/>
        <end position="240"/>
    </location>
</feature>
<feature type="binding site" evidence="1">
    <location>
        <position position="108"/>
    </location>
    <ligand>
        <name>S-adenosyl-L-methionine</name>
        <dbReference type="ChEBI" id="CHEBI:59789"/>
    </ligand>
</feature>
<feature type="binding site" evidence="1">
    <location>
        <begin position="127"/>
        <end position="132"/>
    </location>
    <ligand>
        <name>S-adenosyl-L-methionine</name>
        <dbReference type="ChEBI" id="CHEBI:59789"/>
    </ligand>
</feature>
<name>TRMD_STRMU</name>
<proteinExistence type="inferred from homology"/>
<comment type="function">
    <text evidence="1">Specifically methylates guanosine-37 in various tRNAs.</text>
</comment>
<comment type="catalytic activity">
    <reaction evidence="1">
        <text>guanosine(37) in tRNA + S-adenosyl-L-methionine = N(1)-methylguanosine(37) in tRNA + S-adenosyl-L-homocysteine + H(+)</text>
        <dbReference type="Rhea" id="RHEA:36899"/>
        <dbReference type="Rhea" id="RHEA-COMP:10145"/>
        <dbReference type="Rhea" id="RHEA-COMP:10147"/>
        <dbReference type="ChEBI" id="CHEBI:15378"/>
        <dbReference type="ChEBI" id="CHEBI:57856"/>
        <dbReference type="ChEBI" id="CHEBI:59789"/>
        <dbReference type="ChEBI" id="CHEBI:73542"/>
        <dbReference type="ChEBI" id="CHEBI:74269"/>
        <dbReference type="EC" id="2.1.1.228"/>
    </reaction>
</comment>
<comment type="subunit">
    <text evidence="1">Homodimer.</text>
</comment>
<comment type="subcellular location">
    <subcellularLocation>
        <location evidence="1">Cytoplasm</location>
    </subcellularLocation>
</comment>
<comment type="similarity">
    <text evidence="1">Belongs to the RNA methyltransferase TrmD family.</text>
</comment>
<gene>
    <name evidence="1" type="primary">trmD</name>
    <name type="ordered locus">SMU_868</name>
</gene>
<reference key="1">
    <citation type="journal article" date="2002" name="Proc. Natl. Acad. Sci. U.S.A.">
        <title>Genome sequence of Streptococcus mutans UA159, a cariogenic dental pathogen.</title>
        <authorList>
            <person name="Ajdic D.J."/>
            <person name="McShan W.M."/>
            <person name="McLaughlin R.E."/>
            <person name="Savic G."/>
            <person name="Chang J."/>
            <person name="Carson M.B."/>
            <person name="Primeaux C."/>
            <person name="Tian R."/>
            <person name="Kenton S."/>
            <person name="Jia H.G."/>
            <person name="Lin S.P."/>
            <person name="Qian Y."/>
            <person name="Li S."/>
            <person name="Zhu H."/>
            <person name="Najar F.Z."/>
            <person name="Lai H."/>
            <person name="White J."/>
            <person name="Roe B.A."/>
            <person name="Ferretti J.J."/>
        </authorList>
    </citation>
    <scope>NUCLEOTIDE SEQUENCE [LARGE SCALE GENOMIC DNA]</scope>
    <source>
        <strain>ATCC 700610 / UA159</strain>
    </source>
</reference>
<accession>Q8DUN6</accession>